<feature type="chain" id="PRO_0000410786" description="Protein phosphatase CheZ">
    <location>
        <begin position="1"/>
        <end position="239"/>
    </location>
</feature>
<feature type="site" description="Enhances dephosphorylation of CheY-P" evidence="1">
    <location>
        <position position="168"/>
    </location>
</feature>
<name>CHEZ_VIBC3</name>
<comment type="function">
    <text evidence="1">Plays an important role in bacterial chemotaxis signal transduction pathway by accelerating the dephosphorylation of phosphorylated CheY (CheY-P).</text>
</comment>
<comment type="subunit">
    <text evidence="1">Homodimer.</text>
</comment>
<comment type="subcellular location">
    <subcellularLocation>
        <location evidence="1">Cytoplasm</location>
    </subcellularLocation>
</comment>
<comment type="similarity">
    <text evidence="2">Belongs to the CheZ family.</text>
</comment>
<accession>A5F6J8</accession>
<sequence length="239" mass="27232">MISLEQAKELVQLLEQGRQDDANRLFTYVYESANNPMFKEIGMLTRDLHEALKNFQIDERFSEIATDEIPDARERLHYVIQKTEVAANKTMDAVDRCMPIADKLHESLLLIRPEWNGLMNGRIELMHFKSLCHRIDDLLSQVEGDSSELRGELTEILMAQDFQDLTGQIIKRVINLVNEVEKRLVEILTVFGAAQKEQKADKATVASIEPEGPILNPHERIDAVSSQDEVDDLLSSLGF</sequence>
<gene>
    <name type="primary">cheZ</name>
    <name type="ordered locus">VC0395_A1652</name>
    <name type="ordered locus">VC395_2179</name>
</gene>
<keyword id="KW-0145">Chemotaxis</keyword>
<keyword id="KW-0963">Cytoplasm</keyword>
<keyword id="KW-0283">Flagellar rotation</keyword>
<keyword id="KW-0378">Hydrolase</keyword>
<keyword id="KW-0904">Protein phosphatase</keyword>
<dbReference type="EC" id="3.1.3.-"/>
<dbReference type="EMBL" id="CP000627">
    <property type="protein sequence ID" value="ABQ20110.1"/>
    <property type="molecule type" value="Genomic_DNA"/>
</dbReference>
<dbReference type="EMBL" id="CP001235">
    <property type="protein sequence ID" value="ACP10171.1"/>
    <property type="molecule type" value="Genomic_DNA"/>
</dbReference>
<dbReference type="RefSeq" id="WP_000624259.1">
    <property type="nucleotide sequence ID" value="NZ_JAACZH010000001.1"/>
</dbReference>
<dbReference type="SMR" id="A5F6J8"/>
<dbReference type="KEGG" id="vco:VC0395_A1652"/>
<dbReference type="KEGG" id="vcr:VC395_2179"/>
<dbReference type="PATRIC" id="fig|345073.21.peg.2106"/>
<dbReference type="eggNOG" id="COG3143">
    <property type="taxonomic scope" value="Bacteria"/>
</dbReference>
<dbReference type="HOGENOM" id="CLU_080718_0_0_6"/>
<dbReference type="OrthoDB" id="9773007at2"/>
<dbReference type="Proteomes" id="UP000000249">
    <property type="component" value="Chromosome 2"/>
</dbReference>
<dbReference type="GO" id="GO:0009288">
    <property type="term" value="C:bacterial-type flagellum"/>
    <property type="evidence" value="ECO:0007669"/>
    <property type="project" value="InterPro"/>
</dbReference>
<dbReference type="GO" id="GO:0005737">
    <property type="term" value="C:cytoplasm"/>
    <property type="evidence" value="ECO:0007669"/>
    <property type="project" value="UniProtKB-SubCell"/>
</dbReference>
<dbReference type="GO" id="GO:0004721">
    <property type="term" value="F:phosphoprotein phosphatase activity"/>
    <property type="evidence" value="ECO:0007669"/>
    <property type="project" value="UniProtKB-KW"/>
</dbReference>
<dbReference type="GO" id="GO:0097588">
    <property type="term" value="P:archaeal or bacterial-type flagellum-dependent cell motility"/>
    <property type="evidence" value="ECO:0007669"/>
    <property type="project" value="UniProtKB-KW"/>
</dbReference>
<dbReference type="GO" id="GO:0006935">
    <property type="term" value="P:chemotaxis"/>
    <property type="evidence" value="ECO:0007669"/>
    <property type="project" value="UniProtKB-KW"/>
</dbReference>
<dbReference type="GO" id="GO:0050920">
    <property type="term" value="P:regulation of chemotaxis"/>
    <property type="evidence" value="ECO:0007669"/>
    <property type="project" value="InterPro"/>
</dbReference>
<dbReference type="FunFam" id="1.10.287.500:FF:000003">
    <property type="entry name" value="Protein phosphatase CheZ"/>
    <property type="match status" value="1"/>
</dbReference>
<dbReference type="Gene3D" id="1.10.287.500">
    <property type="entry name" value="Helix hairpin bin"/>
    <property type="match status" value="1"/>
</dbReference>
<dbReference type="InterPro" id="IPR007439">
    <property type="entry name" value="Chemotax_Pase_CheZ"/>
</dbReference>
<dbReference type="InterPro" id="IPR050992">
    <property type="entry name" value="CheZ_family_phosphatases"/>
</dbReference>
<dbReference type="PANTHER" id="PTHR43693">
    <property type="entry name" value="PROTEIN PHOSPHATASE CHEZ"/>
    <property type="match status" value="1"/>
</dbReference>
<dbReference type="PANTHER" id="PTHR43693:SF1">
    <property type="entry name" value="PROTEIN PHOSPHATASE CHEZ"/>
    <property type="match status" value="1"/>
</dbReference>
<dbReference type="Pfam" id="PF04344">
    <property type="entry name" value="CheZ"/>
    <property type="match status" value="1"/>
</dbReference>
<dbReference type="PIRSF" id="PIRSF002884">
    <property type="entry name" value="CheZ"/>
    <property type="match status" value="1"/>
</dbReference>
<dbReference type="SUPFAM" id="SSF75708">
    <property type="entry name" value="Chemotaxis phosphatase CheZ"/>
    <property type="match status" value="1"/>
</dbReference>
<reference key="1">
    <citation type="submission" date="2007-03" db="EMBL/GenBank/DDBJ databases">
        <authorList>
            <person name="Heidelberg J."/>
        </authorList>
    </citation>
    <scope>NUCLEOTIDE SEQUENCE [LARGE SCALE GENOMIC DNA]</scope>
    <source>
        <strain>ATCC 39541 / Classical Ogawa 395 / O395</strain>
    </source>
</reference>
<reference key="2">
    <citation type="journal article" date="2008" name="PLoS ONE">
        <title>A recalibrated molecular clock and independent origins for the cholera pandemic clones.</title>
        <authorList>
            <person name="Feng L."/>
            <person name="Reeves P.R."/>
            <person name="Lan R."/>
            <person name="Ren Y."/>
            <person name="Gao C."/>
            <person name="Zhou Z."/>
            <person name="Ren Y."/>
            <person name="Cheng J."/>
            <person name="Wang W."/>
            <person name="Wang J."/>
            <person name="Qian W."/>
            <person name="Li D."/>
            <person name="Wang L."/>
        </authorList>
    </citation>
    <scope>NUCLEOTIDE SEQUENCE [LARGE SCALE GENOMIC DNA]</scope>
    <source>
        <strain>ATCC 39541 / Classical Ogawa 395 / O395</strain>
    </source>
</reference>
<protein>
    <recommendedName>
        <fullName>Protein phosphatase CheZ</fullName>
        <ecNumber>3.1.3.-</ecNumber>
    </recommendedName>
    <alternativeName>
        <fullName>Chemotaxis protein CheZ</fullName>
    </alternativeName>
</protein>
<evidence type="ECO:0000250" key="1"/>
<evidence type="ECO:0000305" key="2"/>
<organism>
    <name type="scientific">Vibrio cholerae serotype O1 (strain ATCC 39541 / Classical Ogawa 395 / O395)</name>
    <dbReference type="NCBI Taxonomy" id="345073"/>
    <lineage>
        <taxon>Bacteria</taxon>
        <taxon>Pseudomonadati</taxon>
        <taxon>Pseudomonadota</taxon>
        <taxon>Gammaproteobacteria</taxon>
        <taxon>Vibrionales</taxon>
        <taxon>Vibrionaceae</taxon>
        <taxon>Vibrio</taxon>
    </lineage>
</organism>
<proteinExistence type="inferred from homology"/>